<reference key="1">
    <citation type="journal article" date="2009" name="PLoS Pathog.">
        <title>Molecular evolutionary consequences of niche restriction in Francisella tularensis, a facultative intracellular pathogen.</title>
        <authorList>
            <person name="Larsson P."/>
            <person name="Elfsmark D."/>
            <person name="Svensson K."/>
            <person name="Wikstroem P."/>
            <person name="Forsman M."/>
            <person name="Brettin T."/>
            <person name="Keim P."/>
            <person name="Johansson A."/>
        </authorList>
    </citation>
    <scope>NUCLEOTIDE SEQUENCE [LARGE SCALE GENOMIC DNA]</scope>
    <source>
        <strain>FSC147</strain>
    </source>
</reference>
<keyword id="KW-0032">Aminotransferase</keyword>
<keyword id="KW-0808">Transferase</keyword>
<evidence type="ECO:0000255" key="1">
    <source>
        <dbReference type="HAMAP-Rule" id="MF_00259"/>
    </source>
</evidence>
<protein>
    <recommendedName>
        <fullName evidence="1">Aminomethyltransferase</fullName>
        <ecNumber evidence="1">2.1.2.10</ecNumber>
    </recommendedName>
    <alternativeName>
        <fullName evidence="1">Glycine cleavage system T protein</fullName>
    </alternativeName>
</protein>
<accession>B2SFM1</accession>
<organism>
    <name type="scientific">Francisella tularensis subsp. mediasiatica (strain FSC147)</name>
    <dbReference type="NCBI Taxonomy" id="441952"/>
    <lineage>
        <taxon>Bacteria</taxon>
        <taxon>Pseudomonadati</taxon>
        <taxon>Pseudomonadota</taxon>
        <taxon>Gammaproteobacteria</taxon>
        <taxon>Thiotrichales</taxon>
        <taxon>Francisellaceae</taxon>
        <taxon>Francisella</taxon>
    </lineage>
</organism>
<feature type="chain" id="PRO_1000114097" description="Aminomethyltransferase">
    <location>
        <begin position="1"/>
        <end position="358"/>
    </location>
</feature>
<sequence>MLKTPLYESHIAANAKMVDFSGWSMPINYGSQIQEHNNVREDCGIFDVSHMLAVDIQGSEAEKFLRYLLANDIAKLQENKAQYGCMLNHDAGIVDDLITYKVTDEHFRIVVNAGNRESDVAWFNQNAQNFDVAITPQTDLAIVAVQGPKAVAVIKRVVTKEIAAEIEALLPFSFKFFSKWMVARTGYTGEDGFEVILPATQVKKFWDSLLENGAQPAGLGARDTLRLEAGMHLYGADMDTSTTPLERGLGWSVDLSDEHRDFIGKKAYLAKKAQGVDTKWVGVVLKTKGVLRAGQEIDFDNGEKGYITSGSFSPTLKVAIGLAYVPKQADNPVVNIRGKELEVELVKPKFVKNGKSLI</sequence>
<gene>
    <name evidence="1" type="primary">gcvT</name>
    <name type="ordered locus">FTM_0563</name>
</gene>
<name>GCST_FRATM</name>
<dbReference type="EC" id="2.1.2.10" evidence="1"/>
<dbReference type="EMBL" id="CP000915">
    <property type="protein sequence ID" value="ACD30564.1"/>
    <property type="molecule type" value="Genomic_DNA"/>
</dbReference>
<dbReference type="SMR" id="B2SFM1"/>
<dbReference type="KEGG" id="ftm:FTM_0563"/>
<dbReference type="HOGENOM" id="CLU_007884_10_2_6"/>
<dbReference type="GO" id="GO:0005829">
    <property type="term" value="C:cytosol"/>
    <property type="evidence" value="ECO:0007669"/>
    <property type="project" value="TreeGrafter"/>
</dbReference>
<dbReference type="GO" id="GO:0005960">
    <property type="term" value="C:glycine cleavage complex"/>
    <property type="evidence" value="ECO:0007669"/>
    <property type="project" value="InterPro"/>
</dbReference>
<dbReference type="GO" id="GO:0004047">
    <property type="term" value="F:aminomethyltransferase activity"/>
    <property type="evidence" value="ECO:0007669"/>
    <property type="project" value="UniProtKB-UniRule"/>
</dbReference>
<dbReference type="GO" id="GO:0008483">
    <property type="term" value="F:transaminase activity"/>
    <property type="evidence" value="ECO:0007669"/>
    <property type="project" value="UniProtKB-KW"/>
</dbReference>
<dbReference type="GO" id="GO:0019464">
    <property type="term" value="P:glycine decarboxylation via glycine cleavage system"/>
    <property type="evidence" value="ECO:0007669"/>
    <property type="project" value="UniProtKB-UniRule"/>
</dbReference>
<dbReference type="FunFam" id="3.30.70.1400:FF:000001">
    <property type="entry name" value="Aminomethyltransferase"/>
    <property type="match status" value="1"/>
</dbReference>
<dbReference type="FunFam" id="4.10.1250.10:FF:000001">
    <property type="entry name" value="Aminomethyltransferase"/>
    <property type="match status" value="1"/>
</dbReference>
<dbReference type="Gene3D" id="2.40.30.110">
    <property type="entry name" value="Aminomethyltransferase beta-barrel domains"/>
    <property type="match status" value="1"/>
</dbReference>
<dbReference type="Gene3D" id="3.30.70.1400">
    <property type="entry name" value="Aminomethyltransferase beta-barrel domains"/>
    <property type="match status" value="1"/>
</dbReference>
<dbReference type="Gene3D" id="4.10.1250.10">
    <property type="entry name" value="Aminomethyltransferase fragment"/>
    <property type="match status" value="1"/>
</dbReference>
<dbReference type="Gene3D" id="3.30.1360.120">
    <property type="entry name" value="Probable tRNA modification gtpase trme, domain 1"/>
    <property type="match status" value="1"/>
</dbReference>
<dbReference type="HAMAP" id="MF_00259">
    <property type="entry name" value="GcvT"/>
    <property type="match status" value="1"/>
</dbReference>
<dbReference type="InterPro" id="IPR006223">
    <property type="entry name" value="GCS_T"/>
</dbReference>
<dbReference type="InterPro" id="IPR022903">
    <property type="entry name" value="GCS_T_bac"/>
</dbReference>
<dbReference type="InterPro" id="IPR013977">
    <property type="entry name" value="GCST_C"/>
</dbReference>
<dbReference type="InterPro" id="IPR006222">
    <property type="entry name" value="GCV_T_N"/>
</dbReference>
<dbReference type="InterPro" id="IPR028896">
    <property type="entry name" value="GcvT/YgfZ/DmdA"/>
</dbReference>
<dbReference type="InterPro" id="IPR029043">
    <property type="entry name" value="GcvT/YgfZ_C"/>
</dbReference>
<dbReference type="InterPro" id="IPR027266">
    <property type="entry name" value="TrmE/GcvT_dom1"/>
</dbReference>
<dbReference type="NCBIfam" id="TIGR00528">
    <property type="entry name" value="gcvT"/>
    <property type="match status" value="1"/>
</dbReference>
<dbReference type="NCBIfam" id="NF001567">
    <property type="entry name" value="PRK00389.1"/>
    <property type="match status" value="1"/>
</dbReference>
<dbReference type="PANTHER" id="PTHR43757">
    <property type="entry name" value="AMINOMETHYLTRANSFERASE"/>
    <property type="match status" value="1"/>
</dbReference>
<dbReference type="PANTHER" id="PTHR43757:SF2">
    <property type="entry name" value="AMINOMETHYLTRANSFERASE, MITOCHONDRIAL"/>
    <property type="match status" value="1"/>
</dbReference>
<dbReference type="Pfam" id="PF01571">
    <property type="entry name" value="GCV_T"/>
    <property type="match status" value="1"/>
</dbReference>
<dbReference type="Pfam" id="PF08669">
    <property type="entry name" value="GCV_T_C"/>
    <property type="match status" value="1"/>
</dbReference>
<dbReference type="PIRSF" id="PIRSF006487">
    <property type="entry name" value="GcvT"/>
    <property type="match status" value="1"/>
</dbReference>
<dbReference type="SUPFAM" id="SSF101790">
    <property type="entry name" value="Aminomethyltransferase beta-barrel domain"/>
    <property type="match status" value="1"/>
</dbReference>
<dbReference type="SUPFAM" id="SSF103025">
    <property type="entry name" value="Folate-binding domain"/>
    <property type="match status" value="1"/>
</dbReference>
<proteinExistence type="inferred from homology"/>
<comment type="function">
    <text evidence="1">The glycine cleavage system catalyzes the degradation of glycine.</text>
</comment>
<comment type="catalytic activity">
    <reaction evidence="1">
        <text>N(6)-[(R)-S(8)-aminomethyldihydrolipoyl]-L-lysyl-[protein] + (6S)-5,6,7,8-tetrahydrofolate = N(6)-[(R)-dihydrolipoyl]-L-lysyl-[protein] + (6R)-5,10-methylene-5,6,7,8-tetrahydrofolate + NH4(+)</text>
        <dbReference type="Rhea" id="RHEA:16945"/>
        <dbReference type="Rhea" id="RHEA-COMP:10475"/>
        <dbReference type="Rhea" id="RHEA-COMP:10492"/>
        <dbReference type="ChEBI" id="CHEBI:15636"/>
        <dbReference type="ChEBI" id="CHEBI:28938"/>
        <dbReference type="ChEBI" id="CHEBI:57453"/>
        <dbReference type="ChEBI" id="CHEBI:83100"/>
        <dbReference type="ChEBI" id="CHEBI:83143"/>
        <dbReference type="EC" id="2.1.2.10"/>
    </reaction>
</comment>
<comment type="subunit">
    <text evidence="1">The glycine cleavage system is composed of four proteins: P, T, L and H.</text>
</comment>
<comment type="similarity">
    <text evidence="1">Belongs to the GcvT family.</text>
</comment>